<evidence type="ECO:0000255" key="1">
    <source>
        <dbReference type="HAMAP-Rule" id="MF_01516"/>
    </source>
</evidence>
<gene>
    <name evidence="1" type="primary">mdh</name>
    <name type="ordered locus">VIBHAR_00795</name>
</gene>
<keyword id="KW-0520">NAD</keyword>
<keyword id="KW-0560">Oxidoreductase</keyword>
<keyword id="KW-0816">Tricarboxylic acid cycle</keyword>
<feature type="chain" id="PRO_1000068595" description="Malate dehydrogenase">
    <location>
        <begin position="1"/>
        <end position="311"/>
    </location>
</feature>
<feature type="active site" description="Proton acceptor" evidence="1">
    <location>
        <position position="177"/>
    </location>
</feature>
<feature type="binding site" evidence="1">
    <location>
        <begin position="7"/>
        <end position="13"/>
    </location>
    <ligand>
        <name>NAD(+)</name>
        <dbReference type="ChEBI" id="CHEBI:57540"/>
    </ligand>
</feature>
<feature type="binding site" evidence="1">
    <location>
        <position position="34"/>
    </location>
    <ligand>
        <name>NAD(+)</name>
        <dbReference type="ChEBI" id="CHEBI:57540"/>
    </ligand>
</feature>
<feature type="binding site" evidence="1">
    <location>
        <position position="81"/>
    </location>
    <ligand>
        <name>substrate</name>
    </ligand>
</feature>
<feature type="binding site" evidence="1">
    <location>
        <position position="87"/>
    </location>
    <ligand>
        <name>substrate</name>
    </ligand>
</feature>
<feature type="binding site" evidence="1">
    <location>
        <position position="94"/>
    </location>
    <ligand>
        <name>NAD(+)</name>
        <dbReference type="ChEBI" id="CHEBI:57540"/>
    </ligand>
</feature>
<feature type="binding site" evidence="1">
    <location>
        <begin position="117"/>
        <end position="119"/>
    </location>
    <ligand>
        <name>NAD(+)</name>
        <dbReference type="ChEBI" id="CHEBI:57540"/>
    </ligand>
</feature>
<feature type="binding site" evidence="1">
    <location>
        <position position="119"/>
    </location>
    <ligand>
        <name>substrate</name>
    </ligand>
</feature>
<feature type="binding site" evidence="1">
    <location>
        <position position="153"/>
    </location>
    <ligand>
        <name>substrate</name>
    </ligand>
</feature>
<feature type="binding site" evidence="1">
    <location>
        <position position="227"/>
    </location>
    <ligand>
        <name>NAD(+)</name>
        <dbReference type="ChEBI" id="CHEBI:57540"/>
    </ligand>
</feature>
<dbReference type="EC" id="1.1.1.37" evidence="1"/>
<dbReference type="EMBL" id="CP000789">
    <property type="protein sequence ID" value="ABU69796.1"/>
    <property type="molecule type" value="Genomic_DNA"/>
</dbReference>
<dbReference type="RefSeq" id="WP_012126909.1">
    <property type="nucleotide sequence ID" value="NC_022269.1"/>
</dbReference>
<dbReference type="SMR" id="A7MWD3"/>
<dbReference type="KEGG" id="vha:VIBHAR_00795"/>
<dbReference type="PATRIC" id="fig|338187.25.peg.1819"/>
<dbReference type="Proteomes" id="UP000008152">
    <property type="component" value="Chromosome I"/>
</dbReference>
<dbReference type="GO" id="GO:0005737">
    <property type="term" value="C:cytoplasm"/>
    <property type="evidence" value="ECO:0007669"/>
    <property type="project" value="TreeGrafter"/>
</dbReference>
<dbReference type="GO" id="GO:0030060">
    <property type="term" value="F:L-malate dehydrogenase (NAD+) activity"/>
    <property type="evidence" value="ECO:0007669"/>
    <property type="project" value="UniProtKB-UniRule"/>
</dbReference>
<dbReference type="GO" id="GO:0006108">
    <property type="term" value="P:malate metabolic process"/>
    <property type="evidence" value="ECO:0007669"/>
    <property type="project" value="InterPro"/>
</dbReference>
<dbReference type="GO" id="GO:0006099">
    <property type="term" value="P:tricarboxylic acid cycle"/>
    <property type="evidence" value="ECO:0007669"/>
    <property type="project" value="UniProtKB-UniRule"/>
</dbReference>
<dbReference type="CDD" id="cd01337">
    <property type="entry name" value="MDH_glyoxysomal_mitochondrial"/>
    <property type="match status" value="1"/>
</dbReference>
<dbReference type="FunFam" id="3.40.50.720:FF:000017">
    <property type="entry name" value="Malate dehydrogenase"/>
    <property type="match status" value="1"/>
</dbReference>
<dbReference type="FunFam" id="3.90.110.10:FF:000001">
    <property type="entry name" value="Malate dehydrogenase"/>
    <property type="match status" value="1"/>
</dbReference>
<dbReference type="Gene3D" id="3.90.110.10">
    <property type="entry name" value="Lactate dehydrogenase/glycoside hydrolase, family 4, C-terminal"/>
    <property type="match status" value="1"/>
</dbReference>
<dbReference type="Gene3D" id="3.40.50.720">
    <property type="entry name" value="NAD(P)-binding Rossmann-like Domain"/>
    <property type="match status" value="1"/>
</dbReference>
<dbReference type="HAMAP" id="MF_01516">
    <property type="entry name" value="Malate_dehydrog_1"/>
    <property type="match status" value="1"/>
</dbReference>
<dbReference type="InterPro" id="IPR001557">
    <property type="entry name" value="L-lactate/malate_DH"/>
</dbReference>
<dbReference type="InterPro" id="IPR022383">
    <property type="entry name" value="Lactate/malate_DH_C"/>
</dbReference>
<dbReference type="InterPro" id="IPR001236">
    <property type="entry name" value="Lactate/malate_DH_N"/>
</dbReference>
<dbReference type="InterPro" id="IPR015955">
    <property type="entry name" value="Lactate_DH/Glyco_Ohase_4_C"/>
</dbReference>
<dbReference type="InterPro" id="IPR001252">
    <property type="entry name" value="Malate_DH_AS"/>
</dbReference>
<dbReference type="InterPro" id="IPR010097">
    <property type="entry name" value="Malate_DH_type1"/>
</dbReference>
<dbReference type="InterPro" id="IPR023958">
    <property type="entry name" value="Malate_DH_type1_bac"/>
</dbReference>
<dbReference type="InterPro" id="IPR036291">
    <property type="entry name" value="NAD(P)-bd_dom_sf"/>
</dbReference>
<dbReference type="NCBIfam" id="TIGR01772">
    <property type="entry name" value="MDH_euk_gproteo"/>
    <property type="match status" value="1"/>
</dbReference>
<dbReference type="PANTHER" id="PTHR11540">
    <property type="entry name" value="MALATE AND LACTATE DEHYDROGENASE"/>
    <property type="match status" value="1"/>
</dbReference>
<dbReference type="PANTHER" id="PTHR11540:SF16">
    <property type="entry name" value="MALATE DEHYDROGENASE, MITOCHONDRIAL"/>
    <property type="match status" value="1"/>
</dbReference>
<dbReference type="Pfam" id="PF02866">
    <property type="entry name" value="Ldh_1_C"/>
    <property type="match status" value="1"/>
</dbReference>
<dbReference type="Pfam" id="PF00056">
    <property type="entry name" value="Ldh_1_N"/>
    <property type="match status" value="1"/>
</dbReference>
<dbReference type="PIRSF" id="PIRSF000102">
    <property type="entry name" value="Lac_mal_DH"/>
    <property type="match status" value="1"/>
</dbReference>
<dbReference type="SUPFAM" id="SSF56327">
    <property type="entry name" value="LDH C-terminal domain-like"/>
    <property type="match status" value="1"/>
</dbReference>
<dbReference type="SUPFAM" id="SSF51735">
    <property type="entry name" value="NAD(P)-binding Rossmann-fold domains"/>
    <property type="match status" value="1"/>
</dbReference>
<dbReference type="PROSITE" id="PS00068">
    <property type="entry name" value="MDH"/>
    <property type="match status" value="1"/>
</dbReference>
<proteinExistence type="inferred from homology"/>
<name>MDH_VIBC1</name>
<sequence length="311" mass="32067">MKVAVIGAAGGIGQALALLLKNRLPAGSDLALYDIAPVTPGVAADLSHIPTPVSIKGYAGEDPTPALEGADVVLISAGVARKPGMDRADLFNVNAGIVKSLAEKIAVVCPTACVGIITNPVNTTVPIAAEVLKKAGVYDKRKLFGVTTLDVIRSETFVAELKDKDPGDVRVPVIGGHSGVTILPLLSQVEGVEFTAEEVEALTKRIQNAGTEVVEAKAGGGSATLSMGQAACRFGLALVRALQGEEGVVECAYVEGDSEHASYFAQPVKLGKDGVEEVLSYGALSDYEKSALDGMLETLNGDINIGVEFAK</sequence>
<protein>
    <recommendedName>
        <fullName evidence="1">Malate dehydrogenase</fullName>
        <ecNumber evidence="1">1.1.1.37</ecNumber>
    </recommendedName>
</protein>
<accession>A7MWD3</accession>
<organism>
    <name type="scientific">Vibrio campbellii (strain ATCC BAA-1116)</name>
    <dbReference type="NCBI Taxonomy" id="2902295"/>
    <lineage>
        <taxon>Bacteria</taxon>
        <taxon>Pseudomonadati</taxon>
        <taxon>Pseudomonadota</taxon>
        <taxon>Gammaproteobacteria</taxon>
        <taxon>Vibrionales</taxon>
        <taxon>Vibrionaceae</taxon>
        <taxon>Vibrio</taxon>
    </lineage>
</organism>
<reference key="1">
    <citation type="submission" date="2007-08" db="EMBL/GenBank/DDBJ databases">
        <authorList>
            <consortium name="The Vibrio harveyi Genome Sequencing Project"/>
            <person name="Bassler B."/>
            <person name="Clifton S.W."/>
            <person name="Fulton L."/>
            <person name="Delehaunty K."/>
            <person name="Fronick C."/>
            <person name="Harrison M."/>
            <person name="Markivic C."/>
            <person name="Fulton R."/>
            <person name="Tin-Wollam A.-M."/>
            <person name="Shah N."/>
            <person name="Pepin K."/>
            <person name="Nash W."/>
            <person name="Thiruvilangam P."/>
            <person name="Bhonagiri V."/>
            <person name="Waters C."/>
            <person name="Tu K.C."/>
            <person name="Irgon J."/>
            <person name="Wilson R.K."/>
        </authorList>
    </citation>
    <scope>NUCLEOTIDE SEQUENCE [LARGE SCALE GENOMIC DNA]</scope>
    <source>
        <strain>ATCC BAA-1116 / BB120</strain>
    </source>
</reference>
<comment type="function">
    <text evidence="1">Catalyzes the reversible oxidation of malate to oxaloacetate.</text>
</comment>
<comment type="catalytic activity">
    <reaction evidence="1">
        <text>(S)-malate + NAD(+) = oxaloacetate + NADH + H(+)</text>
        <dbReference type="Rhea" id="RHEA:21432"/>
        <dbReference type="ChEBI" id="CHEBI:15378"/>
        <dbReference type="ChEBI" id="CHEBI:15589"/>
        <dbReference type="ChEBI" id="CHEBI:16452"/>
        <dbReference type="ChEBI" id="CHEBI:57540"/>
        <dbReference type="ChEBI" id="CHEBI:57945"/>
        <dbReference type="EC" id="1.1.1.37"/>
    </reaction>
</comment>
<comment type="subunit">
    <text evidence="1">Homodimer.</text>
</comment>
<comment type="similarity">
    <text evidence="1">Belongs to the LDH/MDH superfamily. MDH type 1 family.</text>
</comment>